<feature type="propeptide" id="PRO_0000450586" evidence="3">
    <location>
        <begin position="1"/>
        <end position="96"/>
    </location>
</feature>
<feature type="chain" id="PRO_0000450587" description="Polytheonamide B" evidence="3">
    <location>
        <begin position="97"/>
        <end position="145"/>
    </location>
</feature>
<feature type="modified residue" description="2-oxo-5,5-dimethylhexanoate" evidence="1">
    <location>
        <position position="97"/>
    </location>
</feature>
<feature type="modified residue" description="3-methylisoleucine" evidence="1">
    <location>
        <position position="99"/>
    </location>
</feature>
<feature type="modified residue" description="3-methylvaline" evidence="1">
    <location>
        <position position="101"/>
    </location>
</feature>
<feature type="modified residue" description="3-methyl-D-valine" evidence="1">
    <location>
        <position position="102"/>
    </location>
</feature>
<feature type="modified residue" description="3-methylvaline" evidence="1">
    <location>
        <position position="103"/>
    </location>
</feature>
<feature type="modified residue" description="D-alanine (Ala)" evidence="1">
    <location>
        <position position="104"/>
    </location>
</feature>
<feature type="modified residue" description="3-methylvaline" evidence="1">
    <location>
        <position position="105"/>
    </location>
</feature>
<feature type="modified residue" description="3-methyl-D-valine" evidence="1">
    <location>
        <position position="106"/>
    </location>
</feature>
<feature type="modified residue" description="3-methyl-D-valine" evidence="1">
    <location>
        <position position="110"/>
    </location>
</feature>
<feature type="modified residue" description="N4-methyl-D-asparagine" evidence="1">
    <location>
        <position position="112"/>
    </location>
</feature>
<feature type="modified residue" description="3-hydroxyvaline (Thr)" evidence="1">
    <location>
        <position position="113"/>
    </location>
</feature>
<feature type="modified residue" description="3-methylvaline" evidence="1">
    <location>
        <position position="117"/>
    </location>
</feature>
<feature type="modified residue" description="N4-methyl-D-asparagine" evidence="1">
    <location>
        <position position="118"/>
    </location>
</feature>
<feature type="modified residue" description="(3S)-3-methylglutamine" evidence="1">
    <location>
        <position position="119"/>
    </location>
</feature>
<feature type="modified residue" description="3-hydroxy-D-valine" evidence="1">
    <location>
        <position position="120"/>
    </location>
</feature>
<feature type="modified residue" description="N4-methyl-D-asparagine" evidence="1">
    <location>
        <position position="124"/>
    </location>
</feature>
<feature type="modified residue" description="(3R)-N4-methyl-3-hydroxy-D-asparagine" evidence="1">
    <location>
        <position position="126"/>
    </location>
</feature>
<feature type="modified residue" description="3-methylvaline" evidence="1">
    <location>
        <position position="127"/>
    </location>
</feature>
<feature type="modified residue" description="3-hydroxy-D-valine" evidence="1">
    <location>
        <position position="128"/>
    </location>
</feature>
<feature type="modified residue" description="N4-methyl-D-asparagine" evidence="1">
    <location>
        <position position="130"/>
    </location>
</feature>
<feature type="modified residue" description="N4-methyl-D-asparagine" evidence="1">
    <location>
        <position position="132"/>
    </location>
</feature>
<feature type="modified residue" description="(3R)-N4-methyl-3-hydroxy-D-asparagine" evidence="1">
    <location>
        <position position="134"/>
    </location>
</feature>
<feature type="modified residue" description="N4-methyl-D-asparagine" evidence="1">
    <location>
        <position position="136"/>
    </location>
</feature>
<feature type="modified residue" description="D-serine (Ser)" evidence="1">
    <location>
        <position position="138"/>
    </location>
</feature>
<feature type="modified residue" description="D-asparagine" evidence="1">
    <location>
        <position position="140"/>
    </location>
</feature>
<feature type="modified residue" description="3,3-dimethylmethionine" evidence="1">
    <location>
        <position position="141"/>
    </location>
</feature>
<feature type="modified residue" description="D-asparagine" evidence="1">
    <location>
        <position position="142"/>
    </location>
</feature>
<feature type="modified residue" description="D-threonine" evidence="1">
    <location>
        <position position="144"/>
    </location>
</feature>
<reference evidence="4" key="1">
    <citation type="journal article" date="2012" name="Science">
        <title>Metagenome mining reveals polytheonamides as posttranslationally modified ribosomal peptides.</title>
        <authorList>
            <person name="Freeman M.F."/>
            <person name="Gurgui C."/>
            <person name="Helf M.J."/>
            <person name="Morinaka B.I."/>
            <person name="Uria A.R."/>
            <person name="Oldham N.J."/>
            <person name="Sahl H.G."/>
            <person name="Matsunaga S."/>
            <person name="Piel J."/>
        </authorList>
    </citation>
    <scope>NUCLEOTIDE SEQUENCE [GENOMIC DNA]</scope>
    <scope>EXPRESSION IN E.COLI</scope>
    <scope>D-AMINO ACID AT VAL-102; ALA-104; VAL-106; VAL-110; ASN-112; ASN-118; VAL-120; ASN-124; ASN-126; VAL-128; ASN-130; ASN-132; ASN-134; ASN-136; SER-138; ASN-140; ASN-142 AND THR-144</scope>
    <scope>METHYLATION AT ILE-99; VAL-101; VAL-102; VAL-103; VAL-105; VAL-106; VAL-110; ASN-112; THR-113; VAL-117; ASN-118; GLN-119; ASN-124; ASN-126; VAL-127; ASN-130; ASN-132; ASN-134; ASN-136 AND MET-141</scope>
    <scope>HYDROXYLATION AT VAL-120; ASN-126; VAL-128 AND ASN-134</scope>
</reference>
<proteinExistence type="evidence at protein level"/>
<sequence>MADSDNTPTSRKDFETAIIAKAWKDPEYLRRLRSNPREVLQEELEALHPGAQLPDDLGISIHEEDENHVHLVMPRHPQNVSDQTLTDDDLDQAAGGTGIGVVVAVVAGAVANTGAGVNQVAGGNINVVGNINVNANVSVNMNQTT</sequence>
<gene>
    <name evidence="2" type="primary">poyA</name>
</gene>
<keyword id="KW-0044">Antibiotic</keyword>
<keyword id="KW-0929">Antimicrobial</keyword>
<keyword id="KW-0208">D-amino acid</keyword>
<keyword id="KW-0379">Hydroxylation</keyword>
<keyword id="KW-0488">Methylation</keyword>
<organism>
    <name type="scientific">Bacterium symbiont subsp. Theonella swinhoei (strain pTSMAC1)</name>
    <dbReference type="NCBI Taxonomy" id="1221190"/>
    <lineage>
        <taxon>Bacteria</taxon>
    </lineage>
</organism>
<dbReference type="EMBL" id="JX456532">
    <property type="protein sequence ID" value="AFS60639.1"/>
    <property type="molecule type" value="Genomic_DNA"/>
</dbReference>
<dbReference type="SMR" id="J9ZXD8"/>
<dbReference type="TCDB" id="1.D.24.1.1">
    <property type="family name" value="the marine sponge polytheonamide b (ptb) family"/>
</dbReference>
<dbReference type="BioCyc" id="MetaCyc:MONOMER-124150"/>
<dbReference type="GO" id="GO:0003824">
    <property type="term" value="F:catalytic activity"/>
    <property type="evidence" value="ECO:0007669"/>
    <property type="project" value="InterPro"/>
</dbReference>
<dbReference type="GO" id="GO:0046914">
    <property type="term" value="F:transition metal ion binding"/>
    <property type="evidence" value="ECO:0007669"/>
    <property type="project" value="InterPro"/>
</dbReference>
<dbReference type="GO" id="GO:0042742">
    <property type="term" value="P:defense response to bacterium"/>
    <property type="evidence" value="ECO:0007669"/>
    <property type="project" value="UniProtKB-KW"/>
</dbReference>
<dbReference type="Gene3D" id="3.90.330.10">
    <property type="entry name" value="Nitrile hydratase alpha /Thiocyanate hydrolase gamma"/>
    <property type="match status" value="1"/>
</dbReference>
<dbReference type="InterPro" id="IPR036648">
    <property type="entry name" value="CN_Hdrase_a/SCN_Hdrase_g_sf"/>
</dbReference>
<dbReference type="InterPro" id="IPR022513">
    <property type="entry name" value="TOMM_pelo"/>
</dbReference>
<dbReference type="NCBIfam" id="TIGR03793">
    <property type="entry name" value="leader_NHLP"/>
    <property type="match status" value="1"/>
</dbReference>
<dbReference type="SUPFAM" id="SSF56209">
    <property type="entry name" value="Nitrile hydratase alpha chain"/>
    <property type="match status" value="1"/>
</dbReference>
<protein>
    <recommendedName>
        <fullName evidence="2">Polytheonamide B</fullName>
    </recommendedName>
    <alternativeName>
        <fullName evidence="2">Proteusin</fullName>
    </alternativeName>
</protein>
<evidence type="ECO:0000269" key="1">
    <source>
    </source>
</evidence>
<evidence type="ECO:0000303" key="2">
    <source>
    </source>
</evidence>
<evidence type="ECO:0000305" key="3">
    <source>
    </source>
</evidence>
<evidence type="ECO:0000312" key="4">
    <source>
        <dbReference type="EMBL" id="AFS60639.1"/>
    </source>
</evidence>
<comment type="function">
    <text evidence="1">Antimicrobial peptide active against Gram-positive bacteria (MIC=4-&gt;125 ug/ml) (PubMed:22983711). May act by forming transmembrane ion channels, since the peptide rapidly depolarizes the bacterial cytoplasmic membrane, simultaneously decreasing the membrane potential and intracellular potassium contents (PubMed:22983711).</text>
</comment>
<comment type="PTM">
    <text evidence="1">Epimerization of most, and perhaps all, L- to D-amino acids is catalyzed by PoyD, when PoyA and PoyD are coexpressed in E.coli.</text>
</comment>
<comment type="PTM">
    <text evidence="1">N-methylations are catalyzed by PoyE, when PoyA and PoyE are coexpressed in E.coli.</text>
</comment>
<comment type="PTM">
    <text evidence="1 3">To obtain 2-oxo-5,5-dimethylhexanoate, Thr-97 is firstly dehydrated by PoyF (PubMed:22983711). The second step possibly corresponds to methylation by PoyB/C, and the third step may be a cleavage by PoyH/J (Probable).</text>
</comment>
<comment type="miscellaneous">
    <text evidence="3">The name 'proteusin' is inspired by Proteus, a Greek shape-shifting sea god.</text>
</comment>
<comment type="miscellaneous">
    <text evidence="3">Compared to polytheonamide B, polytheonamide A has an additional sulfoxide moiety at Met-141, which arises from spontaneous oxidation during polytheonamide isolation.</text>
</comment>
<name>PROT_BACS1</name>
<accession>J9ZXD8</accession>